<reference key="1">
    <citation type="submission" date="2006-12" db="EMBL/GenBank/DDBJ databases">
        <title>Complete sequence of Acidovorax avenae subsp. citrulli AAC00-1.</title>
        <authorList>
            <person name="Copeland A."/>
            <person name="Lucas S."/>
            <person name="Lapidus A."/>
            <person name="Barry K."/>
            <person name="Detter J.C."/>
            <person name="Glavina del Rio T."/>
            <person name="Dalin E."/>
            <person name="Tice H."/>
            <person name="Pitluck S."/>
            <person name="Kiss H."/>
            <person name="Brettin T."/>
            <person name="Bruce D."/>
            <person name="Han C."/>
            <person name="Tapia R."/>
            <person name="Gilna P."/>
            <person name="Schmutz J."/>
            <person name="Larimer F."/>
            <person name="Land M."/>
            <person name="Hauser L."/>
            <person name="Kyrpides N."/>
            <person name="Kim E."/>
            <person name="Stahl D."/>
            <person name="Richardson P."/>
        </authorList>
    </citation>
    <scope>NUCLEOTIDE SEQUENCE [LARGE SCALE GENOMIC DNA]</scope>
    <source>
        <strain>AAC00-1</strain>
    </source>
</reference>
<accession>A1TTN2</accession>
<proteinExistence type="inferred from homology"/>
<comment type="similarity">
    <text evidence="2">Belongs to the UPF0758 family.</text>
</comment>
<evidence type="ECO:0000255" key="1">
    <source>
        <dbReference type="PROSITE-ProRule" id="PRU01182"/>
    </source>
</evidence>
<evidence type="ECO:0000305" key="2"/>
<gene>
    <name type="ordered locus">Aave_3773</name>
</gene>
<name>Y3773_PARC0</name>
<feature type="chain" id="PRO_1000070978" description="UPF0758 protein Aave_3773">
    <location>
        <begin position="1"/>
        <end position="237"/>
    </location>
</feature>
<feature type="domain" description="MPN" evidence="1">
    <location>
        <begin position="115"/>
        <end position="237"/>
    </location>
</feature>
<feature type="short sequence motif" description="JAMM motif" evidence="1">
    <location>
        <begin position="186"/>
        <end position="199"/>
    </location>
</feature>
<feature type="binding site" evidence="1">
    <location>
        <position position="186"/>
    </location>
    <ligand>
        <name>Zn(2+)</name>
        <dbReference type="ChEBI" id="CHEBI:29105"/>
        <note>catalytic</note>
    </ligand>
</feature>
<feature type="binding site" evidence="1">
    <location>
        <position position="188"/>
    </location>
    <ligand>
        <name>Zn(2+)</name>
        <dbReference type="ChEBI" id="CHEBI:29105"/>
        <note>catalytic</note>
    </ligand>
</feature>
<feature type="binding site" evidence="1">
    <location>
        <position position="199"/>
    </location>
    <ligand>
        <name>Zn(2+)</name>
        <dbReference type="ChEBI" id="CHEBI:29105"/>
        <note>catalytic</note>
    </ligand>
</feature>
<sequence>MALKTLPIEARPRERLLARGPSSLSDTELLAILLRTGIVGKGVMQMAQELLSPALPDPATGALRGGFGGIGGLLQADADALKRIKGLGPAKRTSLVAVLELARRMLAQTLPKRDLFHSPRAVRDYLQLHLGGKPHEVFSVLFLDSQNGLIAMEEMFRGTLSQASVYPREVVVRALHHHAAAVVLVHNHPSGQVQPSRADETLTRSLTDALRLVDVRVLDHIIVAPGSSLSMAEEGLI</sequence>
<protein>
    <recommendedName>
        <fullName>UPF0758 protein Aave_3773</fullName>
    </recommendedName>
</protein>
<keyword id="KW-0378">Hydrolase</keyword>
<keyword id="KW-0479">Metal-binding</keyword>
<keyword id="KW-0482">Metalloprotease</keyword>
<keyword id="KW-0645">Protease</keyword>
<keyword id="KW-0862">Zinc</keyword>
<organism>
    <name type="scientific">Paracidovorax citrulli (strain AAC00-1)</name>
    <name type="common">Acidovorax citrulli</name>
    <dbReference type="NCBI Taxonomy" id="397945"/>
    <lineage>
        <taxon>Bacteria</taxon>
        <taxon>Pseudomonadati</taxon>
        <taxon>Pseudomonadota</taxon>
        <taxon>Betaproteobacteria</taxon>
        <taxon>Burkholderiales</taxon>
        <taxon>Comamonadaceae</taxon>
        <taxon>Paracidovorax</taxon>
    </lineage>
</organism>
<dbReference type="EMBL" id="CP000512">
    <property type="protein sequence ID" value="ABM34320.1"/>
    <property type="molecule type" value="Genomic_DNA"/>
</dbReference>
<dbReference type="RefSeq" id="WP_011796811.1">
    <property type="nucleotide sequence ID" value="NC_008752.1"/>
</dbReference>
<dbReference type="SMR" id="A1TTN2"/>
<dbReference type="STRING" id="397945.Aave_3773"/>
<dbReference type="KEGG" id="aav:Aave_3773"/>
<dbReference type="eggNOG" id="COG2003">
    <property type="taxonomic scope" value="Bacteria"/>
</dbReference>
<dbReference type="HOGENOM" id="CLU_073529_0_0_4"/>
<dbReference type="OrthoDB" id="9804482at2"/>
<dbReference type="Proteomes" id="UP000002596">
    <property type="component" value="Chromosome"/>
</dbReference>
<dbReference type="GO" id="GO:0046872">
    <property type="term" value="F:metal ion binding"/>
    <property type="evidence" value="ECO:0007669"/>
    <property type="project" value="UniProtKB-KW"/>
</dbReference>
<dbReference type="GO" id="GO:0008237">
    <property type="term" value="F:metallopeptidase activity"/>
    <property type="evidence" value="ECO:0007669"/>
    <property type="project" value="UniProtKB-KW"/>
</dbReference>
<dbReference type="GO" id="GO:0006508">
    <property type="term" value="P:proteolysis"/>
    <property type="evidence" value="ECO:0007669"/>
    <property type="project" value="UniProtKB-KW"/>
</dbReference>
<dbReference type="CDD" id="cd08071">
    <property type="entry name" value="MPN_DUF2466"/>
    <property type="match status" value="1"/>
</dbReference>
<dbReference type="Gene3D" id="3.40.140.10">
    <property type="entry name" value="Cytidine Deaminase, domain 2"/>
    <property type="match status" value="1"/>
</dbReference>
<dbReference type="InterPro" id="IPR037518">
    <property type="entry name" value="MPN"/>
</dbReference>
<dbReference type="InterPro" id="IPR025657">
    <property type="entry name" value="RadC_JAB"/>
</dbReference>
<dbReference type="InterPro" id="IPR010994">
    <property type="entry name" value="RuvA_2-like"/>
</dbReference>
<dbReference type="InterPro" id="IPR001405">
    <property type="entry name" value="UPF0758"/>
</dbReference>
<dbReference type="InterPro" id="IPR020891">
    <property type="entry name" value="UPF0758_CS"/>
</dbReference>
<dbReference type="InterPro" id="IPR046778">
    <property type="entry name" value="UPF0758_N"/>
</dbReference>
<dbReference type="NCBIfam" id="NF000642">
    <property type="entry name" value="PRK00024.1"/>
    <property type="match status" value="1"/>
</dbReference>
<dbReference type="NCBIfam" id="TIGR00608">
    <property type="entry name" value="radc"/>
    <property type="match status" value="1"/>
</dbReference>
<dbReference type="PANTHER" id="PTHR30471">
    <property type="entry name" value="DNA REPAIR PROTEIN RADC"/>
    <property type="match status" value="1"/>
</dbReference>
<dbReference type="PANTHER" id="PTHR30471:SF3">
    <property type="entry name" value="UPF0758 PROTEIN YEES-RELATED"/>
    <property type="match status" value="1"/>
</dbReference>
<dbReference type="Pfam" id="PF04002">
    <property type="entry name" value="RadC"/>
    <property type="match status" value="1"/>
</dbReference>
<dbReference type="Pfam" id="PF20582">
    <property type="entry name" value="UPF0758_N"/>
    <property type="match status" value="1"/>
</dbReference>
<dbReference type="SUPFAM" id="SSF47781">
    <property type="entry name" value="RuvA domain 2-like"/>
    <property type="match status" value="1"/>
</dbReference>
<dbReference type="PROSITE" id="PS50249">
    <property type="entry name" value="MPN"/>
    <property type="match status" value="1"/>
</dbReference>
<dbReference type="PROSITE" id="PS01302">
    <property type="entry name" value="UPF0758"/>
    <property type="match status" value="1"/>
</dbReference>